<name>CDR4_CANAX</name>
<gene>
    <name type="primary">CDR4</name>
</gene>
<protein>
    <recommendedName>
        <fullName>ABC transporter CDR4</fullName>
    </recommendedName>
</protein>
<sequence>MADADTSSNSSKTNEDRSQEGFGTYQGYTDRVASEVQELARIISHASIQQLKLKRQHSRQESQKSNEQESELSGKLGVIPVDENGNFVDQRLNPNSPEFNAAYWIQNAHKLVSSDIDYFKPVTIGVAYKNLRAYGSASDADYQSTLVNLIPKYLSLFFREYILRHTGPTFDILKPMDGLIKPGELTVVLGRPGAGCSTFLKTIASQTYGYHIDKDSVIRYNSLTPHEIKKHYRGEVVYCAETENHFPQLTVGDTLEFAAKMRTPQNRPLGVSRDAYARHLAAVVMAVYGLSHTRNTKVGNDFIRGVSGGERKRVSIAEITLNNAMVQCWDNSTRGLDSATALEFIRALKASADIVHTTPLVAIYQCSQDAYDLFDKVVLMYQGYQIYFGSAKKAKQYFIDMGYECPQRQTTADFLTSLTNPAERIVRQGFEGKVPQTPQEFYEYWKKSPEGQQIVADVDQYLTEHSSAAEKEAIKEAHQARQSDHLKPASPYTVSFFMQVRYIAHRNILRIKGNPSIHLFQIFGNIGMSFILSSIFYNLPTATSSFYHRTAALFFAVLFNAFSCLLEIFSLYEARSIVEKHKKYALYHPAADAFASIVTELPTKFIIAIGFNLVYYFMVNFRRTPGNFFFYLLINFSATLAMSHIFRTIGAATKTLQEAMTPAAILLLALTIFTGFVIPTPNMHGWCRWINYLDPLAYAFESLIANEFHNRDFECSQYVPSGGSYPTAGPNRICTPVGSVPGQDFVDGTRYMEMSFDYRNSHKWRNFGIVIGFIVFFFCTYILLCEINKGAMQKGEILLFQQRALKKRKKANNDIESGEIEKVTPEFDNEYENNQDKMLQSGGDTFFWRDLTYQVKIKSEDRVILDHVSGWVKPGQVTALMGASGAGKTTLLNALSDRLTTGVVTEGIRLVNGRPLDSSFQRSIGYVQQQDLHLETSTVREALEFAAYLRQPKSVSRKEKNEYVDYIIRLLEMEQYADAVVGVSGEGLNVEQRKRLSIGVELVAKPKLLVFLDEPTSGLDSQTAWSICKLIRKLADNGQAILCTIHQPSAILLAEFDRLLFLQRGGQTVYFGDLGKNFTTLINYFEKYGAPKCPPEANPAEWMLEVIGAAPGSKANQDYYDVWLKSSEFQEMNSELDLMSEELVKKPLDDDPDRLKPYAAPYWEQYLFVTKRVFEQNWRTPSYLYSKFLLVVTSSLFNGFSFYKADRSLQGLQNQMFSVFMFLVILHTLIQQYLPTFVSQRDLYEVRERPSKTFSWITFIAAQVTAEIPWNIICGTLGYFCWYYPVGLYQNATYTNTVHQRGAFMWFAIVLFFIYTSTLAQLCISFLEIDDNAANLSVLLFTMCLAFCGVLVTKEQLPGFWVFMYRCSPFTYLVSVMLSVGLVDAPVTCAAKEYLRFSPPQGYTCMQYMEPYMKVAGGYLLNENSTTECEFCTMKVTNVFLKMIGSDYSKRGRDIGIYIAFIGINIIGTFILYWFARVPKNFDIKLRRKR</sequence>
<proteinExistence type="inferred from homology"/>
<organism>
    <name type="scientific">Candida albicans</name>
    <name type="common">Yeast</name>
    <dbReference type="NCBI Taxonomy" id="5476"/>
    <lineage>
        <taxon>Eukaryota</taxon>
        <taxon>Fungi</taxon>
        <taxon>Dikarya</taxon>
        <taxon>Ascomycota</taxon>
        <taxon>Saccharomycotina</taxon>
        <taxon>Pichiomycetes</taxon>
        <taxon>Debaryomycetaceae</taxon>
        <taxon>Candida/Lodderomyces clade</taxon>
        <taxon>Candida</taxon>
    </lineage>
</organism>
<evidence type="ECO:0000255" key="1"/>
<evidence type="ECO:0000255" key="2">
    <source>
        <dbReference type="PROSITE-ProRule" id="PRU00434"/>
    </source>
</evidence>
<evidence type="ECO:0000256" key="3">
    <source>
        <dbReference type="SAM" id="MobiDB-lite"/>
    </source>
</evidence>
<evidence type="ECO:0000305" key="4"/>
<dbReference type="EMBL" id="AF044921">
    <property type="protein sequence ID" value="AAC72295.1"/>
    <property type="molecule type" value="Genomic_DNA"/>
</dbReference>
<dbReference type="PIR" id="T30550">
    <property type="entry name" value="T30550"/>
</dbReference>
<dbReference type="SMR" id="O74676"/>
<dbReference type="GlyCosmos" id="O74676">
    <property type="glycosylation" value="2 sites, No reported glycans"/>
</dbReference>
<dbReference type="VEuPathDB" id="FungiDB:C1_08070W_A"/>
<dbReference type="VEuPathDB" id="FungiDB:CAWG_00616"/>
<dbReference type="GO" id="GO:0016020">
    <property type="term" value="C:membrane"/>
    <property type="evidence" value="ECO:0007669"/>
    <property type="project" value="UniProtKB-SubCell"/>
</dbReference>
<dbReference type="GO" id="GO:0140359">
    <property type="term" value="F:ABC-type transporter activity"/>
    <property type="evidence" value="ECO:0007669"/>
    <property type="project" value="InterPro"/>
</dbReference>
<dbReference type="GO" id="GO:0005524">
    <property type="term" value="F:ATP binding"/>
    <property type="evidence" value="ECO:0007669"/>
    <property type="project" value="UniProtKB-KW"/>
</dbReference>
<dbReference type="GO" id="GO:0016887">
    <property type="term" value="F:ATP hydrolysis activity"/>
    <property type="evidence" value="ECO:0007669"/>
    <property type="project" value="InterPro"/>
</dbReference>
<dbReference type="GO" id="GO:1990961">
    <property type="term" value="P:xenobiotic detoxification by transmembrane export across the plasma membrane"/>
    <property type="evidence" value="ECO:0007669"/>
    <property type="project" value="InterPro"/>
</dbReference>
<dbReference type="CDD" id="cd03233">
    <property type="entry name" value="ABCG_PDR_domain1"/>
    <property type="match status" value="1"/>
</dbReference>
<dbReference type="CDD" id="cd03232">
    <property type="entry name" value="ABCG_PDR_domain2"/>
    <property type="match status" value="1"/>
</dbReference>
<dbReference type="FunFam" id="3.40.50.300:FF:000054">
    <property type="entry name" value="ABC multidrug transporter atrF"/>
    <property type="match status" value="1"/>
</dbReference>
<dbReference type="Gene3D" id="3.40.50.300">
    <property type="entry name" value="P-loop containing nucleotide triphosphate hydrolases"/>
    <property type="match status" value="2"/>
</dbReference>
<dbReference type="InterPro" id="IPR003593">
    <property type="entry name" value="AAA+_ATPase"/>
</dbReference>
<dbReference type="InterPro" id="IPR013525">
    <property type="entry name" value="ABC2_TM"/>
</dbReference>
<dbReference type="InterPro" id="IPR029481">
    <property type="entry name" value="ABC_trans_N"/>
</dbReference>
<dbReference type="InterPro" id="IPR003439">
    <property type="entry name" value="ABC_transporter-like_ATP-bd"/>
</dbReference>
<dbReference type="InterPro" id="IPR017871">
    <property type="entry name" value="ABC_transporter-like_CS"/>
</dbReference>
<dbReference type="InterPro" id="IPR043926">
    <property type="entry name" value="ABCG_dom"/>
</dbReference>
<dbReference type="InterPro" id="IPR034001">
    <property type="entry name" value="ABCG_PDR_1"/>
</dbReference>
<dbReference type="InterPro" id="IPR034003">
    <property type="entry name" value="ABCG_PDR_2"/>
</dbReference>
<dbReference type="InterPro" id="IPR005285">
    <property type="entry name" value="Drug-R_PDR/CDR"/>
</dbReference>
<dbReference type="InterPro" id="IPR027417">
    <property type="entry name" value="P-loop_NTPase"/>
</dbReference>
<dbReference type="InterPro" id="IPR010929">
    <property type="entry name" value="PDR_CDR_ABC"/>
</dbReference>
<dbReference type="NCBIfam" id="TIGR00956">
    <property type="entry name" value="3a01205"/>
    <property type="match status" value="1"/>
</dbReference>
<dbReference type="PANTHER" id="PTHR19241">
    <property type="entry name" value="ATP-BINDING CASSETTE TRANSPORTER"/>
    <property type="match status" value="1"/>
</dbReference>
<dbReference type="Pfam" id="PF01061">
    <property type="entry name" value="ABC2_membrane"/>
    <property type="match status" value="2"/>
</dbReference>
<dbReference type="Pfam" id="PF19055">
    <property type="entry name" value="ABC2_membrane_7"/>
    <property type="match status" value="1"/>
</dbReference>
<dbReference type="Pfam" id="PF00005">
    <property type="entry name" value="ABC_tran"/>
    <property type="match status" value="2"/>
</dbReference>
<dbReference type="Pfam" id="PF14510">
    <property type="entry name" value="ABC_trans_N"/>
    <property type="match status" value="1"/>
</dbReference>
<dbReference type="Pfam" id="PF06422">
    <property type="entry name" value="PDR_CDR"/>
    <property type="match status" value="1"/>
</dbReference>
<dbReference type="SMART" id="SM00382">
    <property type="entry name" value="AAA"/>
    <property type="match status" value="2"/>
</dbReference>
<dbReference type="SUPFAM" id="SSF52540">
    <property type="entry name" value="P-loop containing nucleoside triphosphate hydrolases"/>
    <property type="match status" value="2"/>
</dbReference>
<dbReference type="PROSITE" id="PS00211">
    <property type="entry name" value="ABC_TRANSPORTER_1"/>
    <property type="match status" value="1"/>
</dbReference>
<dbReference type="PROSITE" id="PS50893">
    <property type="entry name" value="ABC_TRANSPORTER_2"/>
    <property type="match status" value="2"/>
</dbReference>
<reference key="1">
    <citation type="journal article" date="1998" name="Gene">
        <title>A fourth gene from the Candida albicans CDR family of ABC transporters.</title>
        <authorList>
            <person name="Franz R."/>
            <person name="Michel S."/>
            <person name="Morschhaeuser J."/>
        </authorList>
    </citation>
    <scope>NUCLEOTIDE SEQUENCE [GENOMIC DNA]</scope>
    <source>
        <strain>1161</strain>
    </source>
</reference>
<accession>O74676</accession>
<feature type="chain" id="PRO_0000093438" description="ABC transporter CDR4">
    <location>
        <begin position="1"/>
        <end position="1490"/>
    </location>
</feature>
<feature type="topological domain" description="Cytoplasmic" evidence="1">
    <location>
        <begin position="1"/>
        <end position="516"/>
    </location>
</feature>
<feature type="transmembrane region" description="Helical" evidence="1">
    <location>
        <begin position="517"/>
        <end position="537"/>
    </location>
</feature>
<feature type="transmembrane region" description="Helical" evidence="1">
    <location>
        <begin position="551"/>
        <end position="571"/>
    </location>
</feature>
<feature type="transmembrane region" description="Helical" evidence="1">
    <location>
        <begin position="601"/>
        <end position="621"/>
    </location>
</feature>
<feature type="transmembrane region" description="Helical" evidence="1">
    <location>
        <begin position="626"/>
        <end position="646"/>
    </location>
</feature>
<feature type="transmembrane region" description="Helical" evidence="1">
    <location>
        <begin position="659"/>
        <end position="679"/>
    </location>
</feature>
<feature type="transmembrane region" description="Helical" evidence="1">
    <location>
        <begin position="767"/>
        <end position="787"/>
    </location>
</feature>
<feature type="topological domain" description="Cytoplasmic" evidence="1">
    <location>
        <begin position="788"/>
        <end position="1182"/>
    </location>
</feature>
<feature type="transmembrane region" description="Helical" evidence="1">
    <location>
        <begin position="1183"/>
        <end position="1203"/>
    </location>
</feature>
<feature type="transmembrane region" description="Helical" evidence="1">
    <location>
        <begin position="1217"/>
        <end position="1237"/>
    </location>
</feature>
<feature type="transmembrane region" description="Helical" evidence="1">
    <location>
        <begin position="1268"/>
        <end position="1288"/>
    </location>
</feature>
<feature type="transmembrane region" description="Helical" evidence="1">
    <location>
        <begin position="1304"/>
        <end position="1324"/>
    </location>
</feature>
<feature type="transmembrane region" description="Helical" evidence="1">
    <location>
        <begin position="1333"/>
        <end position="1353"/>
    </location>
</feature>
<feature type="transmembrane region" description="Helical" evidence="1">
    <location>
        <begin position="1370"/>
        <end position="1390"/>
    </location>
</feature>
<feature type="transmembrane region" description="Helical" evidence="1">
    <location>
        <begin position="1455"/>
        <end position="1475"/>
    </location>
</feature>
<feature type="domain" description="ABC transporter 1" evidence="2">
    <location>
        <begin position="151"/>
        <end position="407"/>
    </location>
</feature>
<feature type="domain" description="ABC transporter 2" evidence="2">
    <location>
        <begin position="846"/>
        <end position="1090"/>
    </location>
</feature>
<feature type="region of interest" description="Disordered" evidence="3">
    <location>
        <begin position="1"/>
        <end position="26"/>
    </location>
</feature>
<feature type="region of interest" description="Disordered" evidence="3">
    <location>
        <begin position="53"/>
        <end position="75"/>
    </location>
</feature>
<feature type="compositionally biased region" description="Polar residues" evidence="3">
    <location>
        <begin position="1"/>
        <end position="12"/>
    </location>
</feature>
<feature type="compositionally biased region" description="Basic and acidic residues" evidence="3">
    <location>
        <begin position="58"/>
        <end position="67"/>
    </location>
</feature>
<feature type="binding site" evidence="2">
    <location>
        <begin position="882"/>
        <end position="889"/>
    </location>
    <ligand>
        <name>ATP</name>
        <dbReference type="ChEBI" id="CHEBI:30616"/>
    </ligand>
</feature>
<feature type="glycosylation site" description="N-linked (GlcNAc...) asparagine" evidence="1">
    <location>
        <position position="1291"/>
    </location>
</feature>
<feature type="glycosylation site" description="N-linked (GlcNAc...) asparagine" evidence="1">
    <location>
        <position position="1424"/>
    </location>
</feature>
<keyword id="KW-0067">ATP-binding</keyword>
<keyword id="KW-0325">Glycoprotein</keyword>
<keyword id="KW-0472">Membrane</keyword>
<keyword id="KW-0547">Nucleotide-binding</keyword>
<keyword id="KW-0677">Repeat</keyword>
<keyword id="KW-0812">Transmembrane</keyword>
<keyword id="KW-1133">Transmembrane helix</keyword>
<keyword id="KW-0813">Transport</keyword>
<comment type="subcellular location">
    <subcellularLocation>
        <location evidence="4">Membrane</location>
        <topology evidence="4">Multi-pass membrane protein</topology>
    </subcellularLocation>
</comment>
<comment type="similarity">
    <text evidence="4">Belongs to the ABC transporter superfamily. ABCG family. PDR (TC 3.A.1.205) subfamily.</text>
</comment>